<protein>
    <recommendedName>
        <fullName evidence="1">Alanine racemase</fullName>
        <ecNumber evidence="1">5.1.1.1</ecNumber>
    </recommendedName>
</protein>
<proteinExistence type="inferred from homology"/>
<sequence>MTVGYLRPTRILVDQNAIYENIQNELKHLEGTDTVIFPVLKANAYGHGLIPVAEAAQAAGAAGFCVALLDEALALRRANFTEPILVLGITQPSEIELAAANQISLTVGSLEWLQEATAIAQQVPYLHPVPIHLSIDSGMGRIGMRDEAELLAAYTFIKAHSDYFDFEGVFTHFATADDPDDTYFKEQSARFNQLMTALPERPRFVHVSNSATSLWHAACNGNIIRMGISLYGLNPSGNAIPDLPYPLKQALGIESELVFVKQVAAGTKIGYGATYEASEGEWIGTIPMGYADGWLRRMQGSTVLVDGQRCEIVGRICMDQMMIRLPKRYPVGTKVVFVGKSGDDEITLQEVADYADTIHYEIICDLSDRIPRVYTGLNEH</sequence>
<keyword id="KW-0413">Isomerase</keyword>
<keyword id="KW-0663">Pyridoxal phosphate</keyword>
<keyword id="KW-1185">Reference proteome</keyword>
<reference key="1">
    <citation type="journal article" date="2005" name="Nat. Biotechnol.">
        <title>The complete genome sequence of the meat-borne lactic acid bacterium Lactobacillus sakei 23K.</title>
        <authorList>
            <person name="Chaillou S."/>
            <person name="Champomier-Verges M.-C."/>
            <person name="Cornet M."/>
            <person name="Crutz-Le Coq A.-M."/>
            <person name="Dudez A.-M."/>
            <person name="Martin V."/>
            <person name="Beaufils S."/>
            <person name="Darbon-Rongere E."/>
            <person name="Bossy R."/>
            <person name="Loux V."/>
            <person name="Zagorec M."/>
        </authorList>
    </citation>
    <scope>NUCLEOTIDE SEQUENCE [LARGE SCALE GENOMIC DNA]</scope>
    <source>
        <strain>23K</strain>
    </source>
</reference>
<accession>Q38V64</accession>
<evidence type="ECO:0000255" key="1">
    <source>
        <dbReference type="HAMAP-Rule" id="MF_01201"/>
    </source>
</evidence>
<dbReference type="EC" id="5.1.1.1" evidence="1"/>
<dbReference type="EMBL" id="CR936503">
    <property type="protein sequence ID" value="CAI55920.1"/>
    <property type="molecule type" value="Genomic_DNA"/>
</dbReference>
<dbReference type="RefSeq" id="WP_011375306.1">
    <property type="nucleotide sequence ID" value="NC_007576.1"/>
</dbReference>
<dbReference type="SMR" id="Q38V64"/>
<dbReference type="STRING" id="314315.LCA_1613"/>
<dbReference type="KEGG" id="lsa:LCA_1613"/>
<dbReference type="eggNOG" id="COG0787">
    <property type="taxonomic scope" value="Bacteria"/>
</dbReference>
<dbReference type="HOGENOM" id="CLU_028393_2_1_9"/>
<dbReference type="OrthoDB" id="9813814at2"/>
<dbReference type="UniPathway" id="UPA00042">
    <property type="reaction ID" value="UER00497"/>
</dbReference>
<dbReference type="Proteomes" id="UP000002707">
    <property type="component" value="Chromosome"/>
</dbReference>
<dbReference type="GO" id="GO:0005829">
    <property type="term" value="C:cytosol"/>
    <property type="evidence" value="ECO:0007669"/>
    <property type="project" value="TreeGrafter"/>
</dbReference>
<dbReference type="GO" id="GO:0008784">
    <property type="term" value="F:alanine racemase activity"/>
    <property type="evidence" value="ECO:0007669"/>
    <property type="project" value="UniProtKB-UniRule"/>
</dbReference>
<dbReference type="GO" id="GO:0030170">
    <property type="term" value="F:pyridoxal phosphate binding"/>
    <property type="evidence" value="ECO:0007669"/>
    <property type="project" value="UniProtKB-UniRule"/>
</dbReference>
<dbReference type="GO" id="GO:0030632">
    <property type="term" value="P:D-alanine biosynthetic process"/>
    <property type="evidence" value="ECO:0007669"/>
    <property type="project" value="UniProtKB-UniRule"/>
</dbReference>
<dbReference type="GO" id="GO:0009252">
    <property type="term" value="P:peptidoglycan biosynthetic process"/>
    <property type="evidence" value="ECO:0007669"/>
    <property type="project" value="TreeGrafter"/>
</dbReference>
<dbReference type="CDD" id="cd00430">
    <property type="entry name" value="PLPDE_III_AR"/>
    <property type="match status" value="1"/>
</dbReference>
<dbReference type="FunFam" id="2.40.37.10:FF:000006">
    <property type="entry name" value="Alanine racemase"/>
    <property type="match status" value="1"/>
</dbReference>
<dbReference type="FunFam" id="3.20.20.10:FF:000002">
    <property type="entry name" value="Alanine racemase"/>
    <property type="match status" value="1"/>
</dbReference>
<dbReference type="Gene3D" id="3.20.20.10">
    <property type="entry name" value="Alanine racemase"/>
    <property type="match status" value="1"/>
</dbReference>
<dbReference type="Gene3D" id="2.40.37.10">
    <property type="entry name" value="Lyase, Ornithine Decarboxylase, Chain A, domain 1"/>
    <property type="match status" value="1"/>
</dbReference>
<dbReference type="HAMAP" id="MF_01201">
    <property type="entry name" value="Ala_racemase"/>
    <property type="match status" value="1"/>
</dbReference>
<dbReference type="InterPro" id="IPR000821">
    <property type="entry name" value="Ala_racemase"/>
</dbReference>
<dbReference type="InterPro" id="IPR009006">
    <property type="entry name" value="Ala_racemase/Decarboxylase_C"/>
</dbReference>
<dbReference type="InterPro" id="IPR011079">
    <property type="entry name" value="Ala_racemase_C"/>
</dbReference>
<dbReference type="InterPro" id="IPR001608">
    <property type="entry name" value="Ala_racemase_N"/>
</dbReference>
<dbReference type="InterPro" id="IPR029066">
    <property type="entry name" value="PLP-binding_barrel"/>
</dbReference>
<dbReference type="NCBIfam" id="TIGR00492">
    <property type="entry name" value="alr"/>
    <property type="match status" value="1"/>
</dbReference>
<dbReference type="PANTHER" id="PTHR30511">
    <property type="entry name" value="ALANINE RACEMASE"/>
    <property type="match status" value="1"/>
</dbReference>
<dbReference type="PANTHER" id="PTHR30511:SF0">
    <property type="entry name" value="ALANINE RACEMASE, CATABOLIC-RELATED"/>
    <property type="match status" value="1"/>
</dbReference>
<dbReference type="Pfam" id="PF00842">
    <property type="entry name" value="Ala_racemase_C"/>
    <property type="match status" value="1"/>
</dbReference>
<dbReference type="Pfam" id="PF01168">
    <property type="entry name" value="Ala_racemase_N"/>
    <property type="match status" value="1"/>
</dbReference>
<dbReference type="PRINTS" id="PR00992">
    <property type="entry name" value="ALARACEMASE"/>
</dbReference>
<dbReference type="SMART" id="SM01005">
    <property type="entry name" value="Ala_racemase_C"/>
    <property type="match status" value="1"/>
</dbReference>
<dbReference type="SUPFAM" id="SSF50621">
    <property type="entry name" value="Alanine racemase C-terminal domain-like"/>
    <property type="match status" value="1"/>
</dbReference>
<dbReference type="SUPFAM" id="SSF51419">
    <property type="entry name" value="PLP-binding barrel"/>
    <property type="match status" value="1"/>
</dbReference>
<name>ALR_LATSS</name>
<organism>
    <name type="scientific">Latilactobacillus sakei subsp. sakei (strain 23K)</name>
    <name type="common">Lactobacillus sakei subsp. sakei</name>
    <dbReference type="NCBI Taxonomy" id="314315"/>
    <lineage>
        <taxon>Bacteria</taxon>
        <taxon>Bacillati</taxon>
        <taxon>Bacillota</taxon>
        <taxon>Bacilli</taxon>
        <taxon>Lactobacillales</taxon>
        <taxon>Lactobacillaceae</taxon>
        <taxon>Latilactobacillus</taxon>
    </lineage>
</organism>
<feature type="chain" id="PRO_1000066004" description="Alanine racemase">
    <location>
        <begin position="1"/>
        <end position="380"/>
    </location>
</feature>
<feature type="active site" description="Proton acceptor; specific for D-alanine" evidence="1">
    <location>
        <position position="41"/>
    </location>
</feature>
<feature type="active site" description="Proton acceptor; specific for L-alanine" evidence="1">
    <location>
        <position position="271"/>
    </location>
</feature>
<feature type="binding site" evidence="1">
    <location>
        <position position="141"/>
    </location>
    <ligand>
        <name>substrate</name>
    </ligand>
</feature>
<feature type="binding site" evidence="1">
    <location>
        <position position="318"/>
    </location>
    <ligand>
        <name>substrate</name>
    </ligand>
</feature>
<feature type="modified residue" description="N6-(pyridoxal phosphate)lysine" evidence="1">
    <location>
        <position position="41"/>
    </location>
</feature>
<comment type="function">
    <text evidence="1">Catalyzes the interconversion of L-alanine and D-alanine. May also act on other amino acids.</text>
</comment>
<comment type="catalytic activity">
    <reaction evidence="1">
        <text>L-alanine = D-alanine</text>
        <dbReference type="Rhea" id="RHEA:20249"/>
        <dbReference type="ChEBI" id="CHEBI:57416"/>
        <dbReference type="ChEBI" id="CHEBI:57972"/>
        <dbReference type="EC" id="5.1.1.1"/>
    </reaction>
</comment>
<comment type="cofactor">
    <cofactor evidence="1">
        <name>pyridoxal 5'-phosphate</name>
        <dbReference type="ChEBI" id="CHEBI:597326"/>
    </cofactor>
</comment>
<comment type="pathway">
    <text evidence="1">Amino-acid biosynthesis; D-alanine biosynthesis; D-alanine from L-alanine: step 1/1.</text>
</comment>
<comment type="similarity">
    <text evidence="1">Belongs to the alanine racemase family.</text>
</comment>
<gene>
    <name type="primary">alr</name>
    <name type="ordered locus">LCA_1613</name>
</gene>